<accession>Q2KWD6</accession>
<reference key="1">
    <citation type="journal article" date="2006" name="J. Bacteriol.">
        <title>Comparison of the genome sequence of the poultry pathogen Bordetella avium with those of B. bronchiseptica, B. pertussis, and B. parapertussis reveals extensive diversity in surface structures associated with host interaction.</title>
        <authorList>
            <person name="Sebaihia M."/>
            <person name="Preston A."/>
            <person name="Maskell D.J."/>
            <person name="Kuzmiak H."/>
            <person name="Connell T.D."/>
            <person name="King N.D."/>
            <person name="Orndorff P.E."/>
            <person name="Miyamoto D.M."/>
            <person name="Thomson N.R."/>
            <person name="Harris D."/>
            <person name="Goble A."/>
            <person name="Lord A."/>
            <person name="Murphy L."/>
            <person name="Quail M.A."/>
            <person name="Rutter S."/>
            <person name="Squares R."/>
            <person name="Squares S."/>
            <person name="Woodward J."/>
            <person name="Parkhill J."/>
            <person name="Temple L.M."/>
        </authorList>
    </citation>
    <scope>NUCLEOTIDE SEQUENCE [LARGE SCALE GENOMIC DNA]</scope>
    <source>
        <strain>197N</strain>
    </source>
</reference>
<keyword id="KW-0963">Cytoplasm</keyword>
<keyword id="KW-0255">Endonuclease</keyword>
<keyword id="KW-0378">Hydrolase</keyword>
<keyword id="KW-0479">Metal-binding</keyword>
<keyword id="KW-0540">Nuclease</keyword>
<keyword id="KW-1185">Reference proteome</keyword>
<keyword id="KW-0690">Ribosome biogenesis</keyword>
<keyword id="KW-0698">rRNA processing</keyword>
<keyword id="KW-0862">Zinc</keyword>
<evidence type="ECO:0000255" key="1">
    <source>
        <dbReference type="HAMAP-Rule" id="MF_00009"/>
    </source>
</evidence>
<proteinExistence type="inferred from homology"/>
<name>YBEY_BORA1</name>
<comment type="function">
    <text evidence="1">Single strand-specific metallo-endoribonuclease involved in late-stage 70S ribosome quality control and in maturation of the 3' terminus of the 16S rRNA.</text>
</comment>
<comment type="cofactor">
    <cofactor evidence="1">
        <name>Zn(2+)</name>
        <dbReference type="ChEBI" id="CHEBI:29105"/>
    </cofactor>
    <text evidence="1">Binds 1 zinc ion.</text>
</comment>
<comment type="subcellular location">
    <subcellularLocation>
        <location evidence="1">Cytoplasm</location>
    </subcellularLocation>
</comment>
<comment type="similarity">
    <text evidence="1">Belongs to the endoribonuclease YbeY family.</text>
</comment>
<organism>
    <name type="scientific">Bordetella avium (strain 197N)</name>
    <dbReference type="NCBI Taxonomy" id="360910"/>
    <lineage>
        <taxon>Bacteria</taxon>
        <taxon>Pseudomonadati</taxon>
        <taxon>Pseudomonadota</taxon>
        <taxon>Betaproteobacteria</taxon>
        <taxon>Burkholderiales</taxon>
        <taxon>Alcaligenaceae</taxon>
        <taxon>Bordetella</taxon>
    </lineage>
</organism>
<dbReference type="EC" id="3.1.-.-" evidence="1"/>
<dbReference type="EMBL" id="AM167904">
    <property type="protein sequence ID" value="CAJ48448.1"/>
    <property type="molecule type" value="Genomic_DNA"/>
</dbReference>
<dbReference type="RefSeq" id="WP_012416529.1">
    <property type="nucleotide sequence ID" value="NC_010645.1"/>
</dbReference>
<dbReference type="SMR" id="Q2KWD6"/>
<dbReference type="STRING" id="360910.BAV0837"/>
<dbReference type="KEGG" id="bav:BAV0837"/>
<dbReference type="eggNOG" id="COG0319">
    <property type="taxonomic scope" value="Bacteria"/>
</dbReference>
<dbReference type="HOGENOM" id="CLU_106710_0_1_4"/>
<dbReference type="OrthoDB" id="9807740at2"/>
<dbReference type="Proteomes" id="UP000001977">
    <property type="component" value="Chromosome"/>
</dbReference>
<dbReference type="GO" id="GO:0005737">
    <property type="term" value="C:cytoplasm"/>
    <property type="evidence" value="ECO:0007669"/>
    <property type="project" value="UniProtKB-SubCell"/>
</dbReference>
<dbReference type="GO" id="GO:0004222">
    <property type="term" value="F:metalloendopeptidase activity"/>
    <property type="evidence" value="ECO:0007669"/>
    <property type="project" value="InterPro"/>
</dbReference>
<dbReference type="GO" id="GO:0004521">
    <property type="term" value="F:RNA endonuclease activity"/>
    <property type="evidence" value="ECO:0007669"/>
    <property type="project" value="UniProtKB-UniRule"/>
</dbReference>
<dbReference type="GO" id="GO:0008270">
    <property type="term" value="F:zinc ion binding"/>
    <property type="evidence" value="ECO:0007669"/>
    <property type="project" value="UniProtKB-UniRule"/>
</dbReference>
<dbReference type="GO" id="GO:0006364">
    <property type="term" value="P:rRNA processing"/>
    <property type="evidence" value="ECO:0007669"/>
    <property type="project" value="UniProtKB-UniRule"/>
</dbReference>
<dbReference type="Gene3D" id="3.40.390.30">
    <property type="entry name" value="Metalloproteases ('zincins'), catalytic domain"/>
    <property type="match status" value="1"/>
</dbReference>
<dbReference type="HAMAP" id="MF_00009">
    <property type="entry name" value="Endoribonucl_YbeY"/>
    <property type="match status" value="1"/>
</dbReference>
<dbReference type="InterPro" id="IPR023091">
    <property type="entry name" value="MetalPrtase_cat_dom_sf_prd"/>
</dbReference>
<dbReference type="InterPro" id="IPR002036">
    <property type="entry name" value="YbeY"/>
</dbReference>
<dbReference type="InterPro" id="IPR020549">
    <property type="entry name" value="YbeY_CS"/>
</dbReference>
<dbReference type="NCBIfam" id="TIGR00043">
    <property type="entry name" value="rRNA maturation RNase YbeY"/>
    <property type="match status" value="1"/>
</dbReference>
<dbReference type="PANTHER" id="PTHR46986">
    <property type="entry name" value="ENDORIBONUCLEASE YBEY, CHLOROPLASTIC"/>
    <property type="match status" value="1"/>
</dbReference>
<dbReference type="PANTHER" id="PTHR46986:SF1">
    <property type="entry name" value="ENDORIBONUCLEASE YBEY, CHLOROPLASTIC"/>
    <property type="match status" value="1"/>
</dbReference>
<dbReference type="Pfam" id="PF02130">
    <property type="entry name" value="YbeY"/>
    <property type="match status" value="1"/>
</dbReference>
<dbReference type="SUPFAM" id="SSF55486">
    <property type="entry name" value="Metalloproteases ('zincins'), catalytic domain"/>
    <property type="match status" value="1"/>
</dbReference>
<dbReference type="PROSITE" id="PS01306">
    <property type="entry name" value="UPF0054"/>
    <property type="match status" value="1"/>
</dbReference>
<sequence length="161" mass="17760">MKAGEPGLALAVQYAVAEPRLPRWRLRRWAGYALAGAAADGLIDFQAAELNVRLVGQAEGRRLNADFRGRDYATNVLTFEYGVDPLGTARGDIVICAPVLAREAREQKKSFVDHATHLTIHGVLHALGYDHIKVREAKRMEALETRILARMGIADPYLLAD</sequence>
<protein>
    <recommendedName>
        <fullName evidence="1">Endoribonuclease YbeY</fullName>
        <ecNumber evidence="1">3.1.-.-</ecNumber>
    </recommendedName>
</protein>
<feature type="chain" id="PRO_0000284167" description="Endoribonuclease YbeY">
    <location>
        <begin position="1"/>
        <end position="161"/>
    </location>
</feature>
<feature type="binding site" evidence="1">
    <location>
        <position position="121"/>
    </location>
    <ligand>
        <name>Zn(2+)</name>
        <dbReference type="ChEBI" id="CHEBI:29105"/>
        <note>catalytic</note>
    </ligand>
</feature>
<feature type="binding site" evidence="1">
    <location>
        <position position="125"/>
    </location>
    <ligand>
        <name>Zn(2+)</name>
        <dbReference type="ChEBI" id="CHEBI:29105"/>
        <note>catalytic</note>
    </ligand>
</feature>
<feature type="binding site" evidence="1">
    <location>
        <position position="131"/>
    </location>
    <ligand>
        <name>Zn(2+)</name>
        <dbReference type="ChEBI" id="CHEBI:29105"/>
        <note>catalytic</note>
    </ligand>
</feature>
<gene>
    <name evidence="1" type="primary">ybeY</name>
    <name type="ordered locus">BAV0837</name>
</gene>